<protein>
    <recommendedName>
        <fullName>Suppressor of tumorigenicity 7 protein-like</fullName>
    </recommendedName>
</protein>
<evidence type="ECO:0000255" key="1"/>
<evidence type="ECO:0000305" key="2"/>
<gene>
    <name type="primary">st7l</name>
    <name type="ORF">zgc:172009</name>
</gene>
<accession>A9JRA0</accession>
<accession>A4FVF8</accession>
<accession>A7YT61</accession>
<accession>Q05AI7</accession>
<proteinExistence type="evidence at transcript level"/>
<reference key="1">
    <citation type="submission" date="2007-12" db="EMBL/GenBank/DDBJ databases">
        <authorList>
            <consortium name="NIH - Zebrafish Gene Collection (ZGC) project"/>
        </authorList>
    </citation>
    <scope>NUCLEOTIDE SEQUENCE [LARGE SCALE MRNA]</scope>
</reference>
<keyword id="KW-0472">Membrane</keyword>
<keyword id="KW-1185">Reference proteome</keyword>
<keyword id="KW-0812">Transmembrane</keyword>
<keyword id="KW-1133">Transmembrane helix</keyword>
<dbReference type="EMBL" id="BC115264">
    <property type="protein sequence ID" value="AAI15265.1"/>
    <property type="molecule type" value="mRNA"/>
</dbReference>
<dbReference type="EMBL" id="BC124515">
    <property type="protein sequence ID" value="AAI24516.1"/>
    <property type="molecule type" value="mRNA"/>
</dbReference>
<dbReference type="EMBL" id="BC133816">
    <property type="protein sequence ID" value="AAI33817.1"/>
    <property type="molecule type" value="mRNA"/>
</dbReference>
<dbReference type="EMBL" id="BC155576">
    <property type="protein sequence ID" value="AAI55577.1"/>
    <property type="molecule type" value="mRNA"/>
</dbReference>
<dbReference type="RefSeq" id="NP_001104626.1">
    <property type="nucleotide sequence ID" value="NM_001111156.1"/>
</dbReference>
<dbReference type="SMR" id="A9JRA0"/>
<dbReference type="FunCoup" id="A9JRA0">
    <property type="interactions" value="353"/>
</dbReference>
<dbReference type="PaxDb" id="7955-ENSDARP00000094201"/>
<dbReference type="PeptideAtlas" id="A9JRA0"/>
<dbReference type="Ensembl" id="ENSDART00000103425">
    <property type="protein sequence ID" value="ENSDARP00000094201"/>
    <property type="gene ID" value="ENSDARG00000032603"/>
</dbReference>
<dbReference type="GeneID" id="558013"/>
<dbReference type="KEGG" id="dre:558013"/>
<dbReference type="AGR" id="ZFIN:ZDB-GENE-080219-43"/>
<dbReference type="CTD" id="54879"/>
<dbReference type="ZFIN" id="ZDB-GENE-080219-43">
    <property type="gene designation" value="st7l"/>
</dbReference>
<dbReference type="eggNOG" id="KOG3807">
    <property type="taxonomic scope" value="Eukaryota"/>
</dbReference>
<dbReference type="HOGENOM" id="CLU_035578_2_0_1"/>
<dbReference type="InParanoid" id="A9JRA0"/>
<dbReference type="OMA" id="QDYEIMQ"/>
<dbReference type="OrthoDB" id="5914722at2759"/>
<dbReference type="PhylomeDB" id="A9JRA0"/>
<dbReference type="TreeFam" id="TF314162"/>
<dbReference type="PRO" id="PR:A9JRA0"/>
<dbReference type="Proteomes" id="UP000000437">
    <property type="component" value="Chromosome 6"/>
</dbReference>
<dbReference type="Bgee" id="ENSDARG00000032603">
    <property type="expression patterns" value="Expressed in testis and 21 other cell types or tissues"/>
</dbReference>
<dbReference type="GO" id="GO:0016020">
    <property type="term" value="C:membrane"/>
    <property type="evidence" value="ECO:0007669"/>
    <property type="project" value="UniProtKB-SubCell"/>
</dbReference>
<dbReference type="CDD" id="cd11557">
    <property type="entry name" value="ST7"/>
    <property type="match status" value="1"/>
</dbReference>
<dbReference type="Gene3D" id="1.25.40.10">
    <property type="entry name" value="Tetratricopeptide repeat domain"/>
    <property type="match status" value="1"/>
</dbReference>
<dbReference type="InterPro" id="IPR007311">
    <property type="entry name" value="ST7"/>
</dbReference>
<dbReference type="InterPro" id="IPR011990">
    <property type="entry name" value="TPR-like_helical_dom_sf"/>
</dbReference>
<dbReference type="PANTHER" id="PTHR12745">
    <property type="entry name" value="SUPPRESSION OF TUMORIGENICITY 7"/>
    <property type="match status" value="1"/>
</dbReference>
<dbReference type="PANTHER" id="PTHR12745:SF11">
    <property type="entry name" value="SUPPRESSOR OF TUMORIGENICITY 7 PROTEIN-LIKE"/>
    <property type="match status" value="1"/>
</dbReference>
<dbReference type="Pfam" id="PF04184">
    <property type="entry name" value="ST7"/>
    <property type="match status" value="2"/>
</dbReference>
<dbReference type="SUPFAM" id="SSF48452">
    <property type="entry name" value="TPR-like"/>
    <property type="match status" value="1"/>
</dbReference>
<sequence>MADSSGSNPQSPGFTEKLKSWLCWSWTYICALWFAMVLTMVYVLRSPLKLQETVNAASVFLNTLTPKFYVALTGTSSLISGLILIFEWWYFRKYGTSFIEQVSVSHLRPLLGGVENSGSAGLFSSVNGDAEPRSNVAECKVWRNPLNLFRGAEYSRYTWVTGKEPLTYYDMNLSAQDHQTFFLGDTQQLRPEDSVMQKAWRERNPQARIRAAYQAIELNRECAAAYVLLAEEEATTITEAERLFKQALKSAGKDTNLVVYIKRRLAMCARKLGRIKEAVKMMRDLMKEFPLLGMLNIHENLLEALLELQAYADVQAVLAKYDDISLPKSATICYTSALLKARAVSDKFSPEAASRRGLSTAEMNAVEAIHRAVEFNPHVPKYLLEMKSLILPPEHILKRGDSEAVAYAFFHLQHWKRAEGALNLLHCTWEGTFRIIPYPLEKGHLFYPYPGCTETADRELLPSFHEVSVYPKKELPFFILFTAGLCSFCAMLAMLTHQFPELMGVFVKAFFSTLFAPLGFFADKMESFMPSCLWHQLTNV</sequence>
<organism>
    <name type="scientific">Danio rerio</name>
    <name type="common">Zebrafish</name>
    <name type="synonym">Brachydanio rerio</name>
    <dbReference type="NCBI Taxonomy" id="7955"/>
    <lineage>
        <taxon>Eukaryota</taxon>
        <taxon>Metazoa</taxon>
        <taxon>Chordata</taxon>
        <taxon>Craniata</taxon>
        <taxon>Vertebrata</taxon>
        <taxon>Euteleostomi</taxon>
        <taxon>Actinopterygii</taxon>
        <taxon>Neopterygii</taxon>
        <taxon>Teleostei</taxon>
        <taxon>Ostariophysi</taxon>
        <taxon>Cypriniformes</taxon>
        <taxon>Danionidae</taxon>
        <taxon>Danioninae</taxon>
        <taxon>Danio</taxon>
    </lineage>
</organism>
<feature type="chain" id="PRO_0000339231" description="Suppressor of tumorigenicity 7 protein-like">
    <location>
        <begin position="1"/>
        <end position="540"/>
    </location>
</feature>
<feature type="transmembrane region" description="Helical" evidence="1">
    <location>
        <begin position="24"/>
        <end position="44"/>
    </location>
</feature>
<feature type="transmembrane region" description="Helical" evidence="1">
    <location>
        <begin position="68"/>
        <end position="88"/>
    </location>
</feature>
<feature type="transmembrane region" description="Helical" evidence="1">
    <location>
        <begin position="475"/>
        <end position="495"/>
    </location>
</feature>
<feature type="transmembrane region" description="Helical" evidence="1">
    <location>
        <begin position="502"/>
        <end position="522"/>
    </location>
</feature>
<feature type="sequence conflict" description="In Ref. 1; AAI33817." evidence="2" ref="1">
    <original>S</original>
    <variation>R</variation>
    <location>
        <position position="4"/>
    </location>
</feature>
<comment type="subcellular location">
    <subcellularLocation>
        <location evidence="2">Membrane</location>
        <topology evidence="2">Multi-pass membrane protein</topology>
    </subcellularLocation>
</comment>
<comment type="similarity">
    <text evidence="2">Belongs to the ST7 family.</text>
</comment>
<name>ST7L_DANRE</name>